<proteinExistence type="inferred from homology"/>
<protein>
    <recommendedName>
        <fullName>Phenylalanine-4-hydroxylase</fullName>
        <shortName>PAH</shortName>
        <ecNumber>1.14.16.1</ecNumber>
    </recommendedName>
    <alternativeName>
        <fullName>Phe-4-monooxygenase</fullName>
    </alternativeName>
</protein>
<dbReference type="EC" id="1.14.16.1"/>
<dbReference type="EMBL" id="M88627">
    <property type="protein sequence ID" value="AAA25936.1"/>
    <property type="molecule type" value="Genomic_DNA"/>
</dbReference>
<dbReference type="EMBL" id="AE004091">
    <property type="protein sequence ID" value="AAG04261.1"/>
    <property type="molecule type" value="Genomic_DNA"/>
</dbReference>
<dbReference type="PIR" id="A53452">
    <property type="entry name" value="A53452"/>
</dbReference>
<dbReference type="PIR" id="F83535">
    <property type="entry name" value="F83535"/>
</dbReference>
<dbReference type="RefSeq" id="NP_249563.1">
    <property type="nucleotide sequence ID" value="NC_002516.2"/>
</dbReference>
<dbReference type="RefSeq" id="WP_003114241.1">
    <property type="nucleotide sequence ID" value="NZ_QZGE01000007.1"/>
</dbReference>
<dbReference type="SMR" id="P43334"/>
<dbReference type="STRING" id="208964.PA0872"/>
<dbReference type="PaxDb" id="208964-PA0872"/>
<dbReference type="DNASU" id="879709"/>
<dbReference type="GeneID" id="879709"/>
<dbReference type="KEGG" id="pae:PA0872"/>
<dbReference type="PATRIC" id="fig|208964.12.peg.906"/>
<dbReference type="PseudoCAP" id="PA0872"/>
<dbReference type="HOGENOM" id="CLU_023198_1_1_6"/>
<dbReference type="InParanoid" id="P43334"/>
<dbReference type="OrthoDB" id="9780502at2"/>
<dbReference type="PhylomeDB" id="P43334"/>
<dbReference type="BioCyc" id="PAER208964:G1FZ6-887-MONOMER"/>
<dbReference type="UniPathway" id="UPA00139">
    <property type="reaction ID" value="UER00337"/>
</dbReference>
<dbReference type="Proteomes" id="UP000002438">
    <property type="component" value="Chromosome"/>
</dbReference>
<dbReference type="GO" id="GO:0005506">
    <property type="term" value="F:iron ion binding"/>
    <property type="evidence" value="ECO:0007669"/>
    <property type="project" value="InterPro"/>
</dbReference>
<dbReference type="GO" id="GO:0004505">
    <property type="term" value="F:phenylalanine 4-monooxygenase activity"/>
    <property type="evidence" value="ECO:0007669"/>
    <property type="project" value="UniProtKB-EC"/>
</dbReference>
<dbReference type="GO" id="GO:0006559">
    <property type="term" value="P:L-phenylalanine catabolic process"/>
    <property type="evidence" value="ECO:0007669"/>
    <property type="project" value="UniProtKB-UniPathway"/>
</dbReference>
<dbReference type="CDD" id="cd03348">
    <property type="entry name" value="pro_PheOH"/>
    <property type="match status" value="1"/>
</dbReference>
<dbReference type="Gene3D" id="1.10.800.10">
    <property type="entry name" value="Aromatic amino acid hydroxylase"/>
    <property type="match status" value="1"/>
</dbReference>
<dbReference type="InterPro" id="IPR001273">
    <property type="entry name" value="ArAA_hydroxylase"/>
</dbReference>
<dbReference type="InterPro" id="IPR018301">
    <property type="entry name" value="ArAA_hydroxylase_Fe/CU_BS"/>
</dbReference>
<dbReference type="InterPro" id="IPR036951">
    <property type="entry name" value="ArAA_hydroxylase_sf"/>
</dbReference>
<dbReference type="InterPro" id="IPR036329">
    <property type="entry name" value="Aro-AA_hydroxylase_C_sf"/>
</dbReference>
<dbReference type="InterPro" id="IPR019774">
    <property type="entry name" value="Aromatic-AA_hydroxylase_C"/>
</dbReference>
<dbReference type="InterPro" id="IPR005960">
    <property type="entry name" value="Phe-4-hydroxylase_mono"/>
</dbReference>
<dbReference type="NCBIfam" id="TIGR01267">
    <property type="entry name" value="Phe4hydrox_mono"/>
    <property type="match status" value="1"/>
</dbReference>
<dbReference type="NCBIfam" id="NF008877">
    <property type="entry name" value="PRK11913.1-2"/>
    <property type="match status" value="1"/>
</dbReference>
<dbReference type="PANTHER" id="PTHR11473">
    <property type="entry name" value="AROMATIC AMINO ACID HYDROXYLASE"/>
    <property type="match status" value="1"/>
</dbReference>
<dbReference type="PANTHER" id="PTHR11473:SF24">
    <property type="entry name" value="PHENYLALANINE-4-HYDROXYLASE"/>
    <property type="match status" value="1"/>
</dbReference>
<dbReference type="Pfam" id="PF00351">
    <property type="entry name" value="Biopterin_H"/>
    <property type="match status" value="1"/>
</dbReference>
<dbReference type="PRINTS" id="PR00372">
    <property type="entry name" value="FYWHYDRXLASE"/>
</dbReference>
<dbReference type="SUPFAM" id="SSF56534">
    <property type="entry name" value="Aromatic aminoacid monoxygenases, catalytic and oligomerization domains"/>
    <property type="match status" value="1"/>
</dbReference>
<dbReference type="PROSITE" id="PS00367">
    <property type="entry name" value="BH4_AAA_HYDROXYL_1"/>
    <property type="match status" value="1"/>
</dbReference>
<dbReference type="PROSITE" id="PS51410">
    <property type="entry name" value="BH4_AAA_HYDROXYL_2"/>
    <property type="match status" value="1"/>
</dbReference>
<accession>P43334</accession>
<organism>
    <name type="scientific">Pseudomonas aeruginosa (strain ATCC 15692 / DSM 22644 / CIP 104116 / JCM 14847 / LMG 12228 / 1C / PRS 101 / PAO1)</name>
    <dbReference type="NCBI Taxonomy" id="208964"/>
    <lineage>
        <taxon>Bacteria</taxon>
        <taxon>Pseudomonadati</taxon>
        <taxon>Pseudomonadota</taxon>
        <taxon>Gammaproteobacteria</taxon>
        <taxon>Pseudomonadales</taxon>
        <taxon>Pseudomonadaceae</taxon>
        <taxon>Pseudomonas</taxon>
    </lineage>
</organism>
<feature type="chain" id="PRO_0000205555" description="Phenylalanine-4-hydroxylase">
    <location>
        <begin position="1"/>
        <end position="262"/>
    </location>
</feature>
<feature type="binding site" evidence="1">
    <location>
        <position position="121"/>
    </location>
    <ligand>
        <name>Fe cation</name>
        <dbReference type="ChEBI" id="CHEBI:24875"/>
    </ligand>
</feature>
<feature type="binding site" evidence="1">
    <location>
        <position position="126"/>
    </location>
    <ligand>
        <name>Fe cation</name>
        <dbReference type="ChEBI" id="CHEBI:24875"/>
    </ligand>
</feature>
<feature type="binding site" evidence="2">
    <location>
        <position position="166"/>
    </location>
    <ligand>
        <name>Fe cation</name>
        <dbReference type="ChEBI" id="CHEBI:24875"/>
    </ligand>
</feature>
<feature type="sequence conflict" description="In Ref. 1; AAA25936." evidence="3" ref="1">
    <original>F</original>
    <variation>L</variation>
    <location>
        <position position="135"/>
    </location>
</feature>
<reference key="1">
    <citation type="journal article" date="1994" name="Proc. Natl. Acad. Sci. U.S.A.">
        <title>Pseudomonas aeruginosa possesses homologues of mammalian phenylalanine hydroxylase and 4 alpha-carbinolamine dehydratase/DCoH as part of a three-component gene cluster.</title>
        <authorList>
            <person name="Zhao G."/>
            <person name="Xia T."/>
            <person name="Song J."/>
            <person name="Roy R.A."/>
        </authorList>
    </citation>
    <scope>NUCLEOTIDE SEQUENCE [GENOMIC DNA]</scope>
    <source>
        <strain>ATCC 15692 / DSM 22644 / CIP 104116 / JCM 14847 / LMG 12228 / 1C / PRS 101 / PAO1</strain>
    </source>
</reference>
<reference key="2">
    <citation type="journal article" date="2000" name="Nature">
        <title>Complete genome sequence of Pseudomonas aeruginosa PAO1, an opportunistic pathogen.</title>
        <authorList>
            <person name="Stover C.K."/>
            <person name="Pham X.-Q.T."/>
            <person name="Erwin A.L."/>
            <person name="Mizoguchi S.D."/>
            <person name="Warrener P."/>
            <person name="Hickey M.J."/>
            <person name="Brinkman F.S.L."/>
            <person name="Hufnagle W.O."/>
            <person name="Kowalik D.J."/>
            <person name="Lagrou M."/>
            <person name="Garber R.L."/>
            <person name="Goltry L."/>
            <person name="Tolentino E."/>
            <person name="Westbrock-Wadman S."/>
            <person name="Yuan Y."/>
            <person name="Brody L.L."/>
            <person name="Coulter S.N."/>
            <person name="Folger K.R."/>
            <person name="Kas A."/>
            <person name="Larbig K."/>
            <person name="Lim R.M."/>
            <person name="Smith K.A."/>
            <person name="Spencer D.H."/>
            <person name="Wong G.K.-S."/>
            <person name="Wu Z."/>
            <person name="Paulsen I.T."/>
            <person name="Reizer J."/>
            <person name="Saier M.H. Jr."/>
            <person name="Hancock R.E.W."/>
            <person name="Lory S."/>
            <person name="Olson M.V."/>
        </authorList>
    </citation>
    <scope>NUCLEOTIDE SEQUENCE [LARGE SCALE GENOMIC DNA]</scope>
    <source>
        <strain>ATCC 15692 / DSM 22644 / CIP 104116 / JCM 14847 / LMG 12228 / 1C / PRS 101 / PAO1</strain>
    </source>
</reference>
<keyword id="KW-0408">Iron</keyword>
<keyword id="KW-0479">Metal-binding</keyword>
<keyword id="KW-0503">Monooxygenase</keyword>
<keyword id="KW-0560">Oxidoreductase</keyword>
<keyword id="KW-0585">Phenylalanine catabolism</keyword>
<keyword id="KW-1185">Reference proteome</keyword>
<gene>
    <name type="primary">phhA</name>
    <name type="ordered locus">PA0872</name>
</gene>
<name>PH4H_PSEAE</name>
<sequence length="262" mass="30322">MKTTQYVARQPDDNGFIHYPETEHQVWNTLITRQLKVIEGRACQEYLDGIEQLGLPHERIPQLDEINRVLQATTGWRVARVPALIPFQTFFELLASQQFPVATFIRTPEELDYLQEPDIFHEIFGHCPLLTNPWFAEFTHTYGKLGLKASKEERVFLARLYWMTIEFGLVETDQGKRIYGGGILSSPKETVYSLSDEPLHQAFNPLEAMRTPYRIDILQPLYFVLPDLKRLFQLAQEDIMALVHEAMRLGLHAPLFPPKQAA</sequence>
<evidence type="ECO:0000250" key="1"/>
<evidence type="ECO:0000255" key="2"/>
<evidence type="ECO:0000305" key="3"/>
<comment type="catalytic activity">
    <reaction>
        <text>(6R)-L-erythro-5,6,7,8-tetrahydrobiopterin + L-phenylalanine + O2 = (4aS,6R)-4a-hydroxy-L-erythro-5,6,7,8-tetrahydrobiopterin + L-tyrosine</text>
        <dbReference type="Rhea" id="RHEA:20273"/>
        <dbReference type="ChEBI" id="CHEBI:15379"/>
        <dbReference type="ChEBI" id="CHEBI:15642"/>
        <dbReference type="ChEBI" id="CHEBI:58095"/>
        <dbReference type="ChEBI" id="CHEBI:58315"/>
        <dbReference type="ChEBI" id="CHEBI:59560"/>
        <dbReference type="EC" id="1.14.16.1"/>
    </reaction>
</comment>
<comment type="cofactor">
    <cofactor>
        <name>Fe(2+)</name>
        <dbReference type="ChEBI" id="CHEBI:29033"/>
    </cofactor>
    <text>Binds 1 Fe(2+) ion.</text>
</comment>
<comment type="pathway">
    <text>Amino-acid degradation; L-phenylalanine degradation; acetoacetate and fumarate from L-phenylalanine: step 1/6.</text>
</comment>
<comment type="subunit">
    <text>Monomer.</text>
</comment>
<comment type="similarity">
    <text evidence="3">Belongs to the biopterin-dependent aromatic amino acid hydroxylase family.</text>
</comment>